<sequence>MKLRRERFERRNGSGKNSQSSSSWMVTFTDLITLILVFFILLFSMSQIDLQKFKAAVDSIQKEGNGLQPDQTSIEKKNTSPSDTKKQEDQQDQLLKKVNTYIKDNHLKAQMTAKRDERGVVLVLQEAVLFDTGEAKVLKNAETLLHQIAVLLQTIPNDIQVEGHTDSRNISTYRYPSNWELSAARASGVIQYFTSKEKLPSKRFIAVGYADTKPVKDNKTNEHMKENRRVEIVIKKSKTTSS</sequence>
<gene>
    <name type="primary">ytxE</name>
    <name type="ordered locus">BSU29720</name>
</gene>
<feature type="chain" id="PRO_0000189593" description="Uncharacterized protein YtxE">
    <location>
        <begin position="1"/>
        <end position="242"/>
    </location>
</feature>
<feature type="topological domain" description="Cytoplasmic" evidence="1">
    <location>
        <begin position="1"/>
        <end position="23"/>
    </location>
</feature>
<feature type="transmembrane region" description="Helical" evidence="1">
    <location>
        <begin position="24"/>
        <end position="44"/>
    </location>
</feature>
<feature type="topological domain" description="Extracellular" evidence="1">
    <location>
        <begin position="45"/>
        <end position="242"/>
    </location>
</feature>
<feature type="domain" description="OmpA-like" evidence="2">
    <location>
        <begin position="117"/>
        <end position="238"/>
    </location>
</feature>
<feature type="region of interest" description="Disordered" evidence="3">
    <location>
        <begin position="1"/>
        <end position="21"/>
    </location>
</feature>
<feature type="region of interest" description="Disordered" evidence="3">
    <location>
        <begin position="64"/>
        <end position="91"/>
    </location>
</feature>
<feature type="compositionally biased region" description="Basic and acidic residues" evidence="3">
    <location>
        <begin position="1"/>
        <end position="12"/>
    </location>
</feature>
<feature type="compositionally biased region" description="Basic and acidic residues" evidence="3">
    <location>
        <begin position="73"/>
        <end position="89"/>
    </location>
</feature>
<reference key="1">
    <citation type="journal article" date="1993" name="Mol. Microbiol.">
        <title>Identification of genes involved in utilization of acetate and acetoin in Bacillus subtilis.</title>
        <authorList>
            <person name="Grundy F.J."/>
            <person name="Waters D.A."/>
            <person name="Takova T.Y."/>
            <person name="Henkin T.M."/>
        </authorList>
    </citation>
    <scope>NUCLEOTIDE SEQUENCE [GENOMIC DNA]</scope>
    <source>
        <strain>168</strain>
    </source>
</reference>
<reference key="2">
    <citation type="journal article" date="1997" name="Microbiology">
        <title>Sequencing and functional annotation of the Bacillus subtilis genes in the 200 kb rrnB-dnaB region.</title>
        <authorList>
            <person name="Lapidus A."/>
            <person name="Galleron N."/>
            <person name="Sorokin A."/>
            <person name="Ehrlich S.D."/>
        </authorList>
    </citation>
    <scope>NUCLEOTIDE SEQUENCE [GENOMIC DNA]</scope>
    <source>
        <strain>168</strain>
    </source>
</reference>
<reference key="3">
    <citation type="journal article" date="1997" name="Nature">
        <title>The complete genome sequence of the Gram-positive bacterium Bacillus subtilis.</title>
        <authorList>
            <person name="Kunst F."/>
            <person name="Ogasawara N."/>
            <person name="Moszer I."/>
            <person name="Albertini A.M."/>
            <person name="Alloni G."/>
            <person name="Azevedo V."/>
            <person name="Bertero M.G."/>
            <person name="Bessieres P."/>
            <person name="Bolotin A."/>
            <person name="Borchert S."/>
            <person name="Borriss R."/>
            <person name="Boursier L."/>
            <person name="Brans A."/>
            <person name="Braun M."/>
            <person name="Brignell S.C."/>
            <person name="Bron S."/>
            <person name="Brouillet S."/>
            <person name="Bruschi C.V."/>
            <person name="Caldwell B."/>
            <person name="Capuano V."/>
            <person name="Carter N.M."/>
            <person name="Choi S.-K."/>
            <person name="Codani J.-J."/>
            <person name="Connerton I.F."/>
            <person name="Cummings N.J."/>
            <person name="Daniel R.A."/>
            <person name="Denizot F."/>
            <person name="Devine K.M."/>
            <person name="Duesterhoeft A."/>
            <person name="Ehrlich S.D."/>
            <person name="Emmerson P.T."/>
            <person name="Entian K.-D."/>
            <person name="Errington J."/>
            <person name="Fabret C."/>
            <person name="Ferrari E."/>
            <person name="Foulger D."/>
            <person name="Fritz C."/>
            <person name="Fujita M."/>
            <person name="Fujita Y."/>
            <person name="Fuma S."/>
            <person name="Galizzi A."/>
            <person name="Galleron N."/>
            <person name="Ghim S.-Y."/>
            <person name="Glaser P."/>
            <person name="Goffeau A."/>
            <person name="Golightly E.J."/>
            <person name="Grandi G."/>
            <person name="Guiseppi G."/>
            <person name="Guy B.J."/>
            <person name="Haga K."/>
            <person name="Haiech J."/>
            <person name="Harwood C.R."/>
            <person name="Henaut A."/>
            <person name="Hilbert H."/>
            <person name="Holsappel S."/>
            <person name="Hosono S."/>
            <person name="Hullo M.-F."/>
            <person name="Itaya M."/>
            <person name="Jones L.-M."/>
            <person name="Joris B."/>
            <person name="Karamata D."/>
            <person name="Kasahara Y."/>
            <person name="Klaerr-Blanchard M."/>
            <person name="Klein C."/>
            <person name="Kobayashi Y."/>
            <person name="Koetter P."/>
            <person name="Koningstein G."/>
            <person name="Krogh S."/>
            <person name="Kumano M."/>
            <person name="Kurita K."/>
            <person name="Lapidus A."/>
            <person name="Lardinois S."/>
            <person name="Lauber J."/>
            <person name="Lazarevic V."/>
            <person name="Lee S.-M."/>
            <person name="Levine A."/>
            <person name="Liu H."/>
            <person name="Masuda S."/>
            <person name="Mauel C."/>
            <person name="Medigue C."/>
            <person name="Medina N."/>
            <person name="Mellado R.P."/>
            <person name="Mizuno M."/>
            <person name="Moestl D."/>
            <person name="Nakai S."/>
            <person name="Noback M."/>
            <person name="Noone D."/>
            <person name="O'Reilly M."/>
            <person name="Ogawa K."/>
            <person name="Ogiwara A."/>
            <person name="Oudega B."/>
            <person name="Park S.-H."/>
            <person name="Parro V."/>
            <person name="Pohl T.M."/>
            <person name="Portetelle D."/>
            <person name="Porwollik S."/>
            <person name="Prescott A.M."/>
            <person name="Presecan E."/>
            <person name="Pujic P."/>
            <person name="Purnelle B."/>
            <person name="Rapoport G."/>
            <person name="Rey M."/>
            <person name="Reynolds S."/>
            <person name="Rieger M."/>
            <person name="Rivolta C."/>
            <person name="Rocha E."/>
            <person name="Roche B."/>
            <person name="Rose M."/>
            <person name="Sadaie Y."/>
            <person name="Sato T."/>
            <person name="Scanlan E."/>
            <person name="Schleich S."/>
            <person name="Schroeter R."/>
            <person name="Scoffone F."/>
            <person name="Sekiguchi J."/>
            <person name="Sekowska A."/>
            <person name="Seror S.J."/>
            <person name="Serror P."/>
            <person name="Shin B.-S."/>
            <person name="Soldo B."/>
            <person name="Sorokin A."/>
            <person name="Tacconi E."/>
            <person name="Takagi T."/>
            <person name="Takahashi H."/>
            <person name="Takemaru K."/>
            <person name="Takeuchi M."/>
            <person name="Tamakoshi A."/>
            <person name="Tanaka T."/>
            <person name="Terpstra P."/>
            <person name="Tognoni A."/>
            <person name="Tosato V."/>
            <person name="Uchiyama S."/>
            <person name="Vandenbol M."/>
            <person name="Vannier F."/>
            <person name="Vassarotti A."/>
            <person name="Viari A."/>
            <person name="Wambutt R."/>
            <person name="Wedler E."/>
            <person name="Wedler H."/>
            <person name="Weitzenegger T."/>
            <person name="Winters P."/>
            <person name="Wipat A."/>
            <person name="Yamamoto H."/>
            <person name="Yamane K."/>
            <person name="Yasumoto K."/>
            <person name="Yata K."/>
            <person name="Yoshida K."/>
            <person name="Yoshikawa H.-F."/>
            <person name="Zumstein E."/>
            <person name="Yoshikawa H."/>
            <person name="Danchin A."/>
        </authorList>
    </citation>
    <scope>NUCLEOTIDE SEQUENCE [LARGE SCALE GENOMIC DNA]</scope>
    <source>
        <strain>168</strain>
    </source>
</reference>
<accession>P39064</accession>
<evidence type="ECO:0000255" key="1"/>
<evidence type="ECO:0000255" key="2">
    <source>
        <dbReference type="PROSITE-ProRule" id="PRU00473"/>
    </source>
</evidence>
<evidence type="ECO:0000256" key="3">
    <source>
        <dbReference type="SAM" id="MobiDB-lite"/>
    </source>
</evidence>
<evidence type="ECO:0000305" key="4"/>
<protein>
    <recommendedName>
        <fullName>Uncharacterized protein YtxE</fullName>
    </recommendedName>
</protein>
<dbReference type="EMBL" id="L17309">
    <property type="protein sequence ID" value="AAA68283.1"/>
    <property type="molecule type" value="Genomic_DNA"/>
</dbReference>
<dbReference type="EMBL" id="AF008220">
    <property type="protein sequence ID" value="AAC00301.1"/>
    <property type="molecule type" value="Genomic_DNA"/>
</dbReference>
<dbReference type="EMBL" id="AL009126">
    <property type="protein sequence ID" value="CAB14950.1"/>
    <property type="molecule type" value="Genomic_DNA"/>
</dbReference>
<dbReference type="PIR" id="S39642">
    <property type="entry name" value="S39642"/>
</dbReference>
<dbReference type="SMR" id="P39064"/>
<dbReference type="FunCoup" id="P39064">
    <property type="interactions" value="411"/>
</dbReference>
<dbReference type="STRING" id="224308.BSU29720"/>
<dbReference type="TCDB" id="1.A.30.1.4">
    <property type="family name" value="the h(+)- or na(+)-translocating bacterial flagellar motor/exbbd outer membrane transport energizer (mot/exb) superfamily"/>
</dbReference>
<dbReference type="PaxDb" id="224308-BSU29720"/>
<dbReference type="DNASU" id="937315"/>
<dbReference type="EnsemblBacteria" id="CAB14950">
    <property type="protein sequence ID" value="CAB14950"/>
    <property type="gene ID" value="BSU_29720"/>
</dbReference>
<dbReference type="GeneID" id="937315"/>
<dbReference type="KEGG" id="bsu:BSU29720"/>
<dbReference type="PATRIC" id="fig|224308.179.peg.3230"/>
<dbReference type="eggNOG" id="COG1360">
    <property type="taxonomic scope" value="Bacteria"/>
</dbReference>
<dbReference type="InParanoid" id="P39064"/>
<dbReference type="OrthoDB" id="9815217at2"/>
<dbReference type="PhylomeDB" id="P39064"/>
<dbReference type="BioCyc" id="BSUB:BSU29720-MONOMER"/>
<dbReference type="Proteomes" id="UP000001570">
    <property type="component" value="Chromosome"/>
</dbReference>
<dbReference type="GO" id="GO:0120101">
    <property type="term" value="C:bacterial-type flagellum stator complex"/>
    <property type="evidence" value="ECO:0000318"/>
    <property type="project" value="GO_Central"/>
</dbReference>
<dbReference type="GO" id="GO:0071973">
    <property type="term" value="P:bacterial-type flagellum-dependent cell motility"/>
    <property type="evidence" value="ECO:0000318"/>
    <property type="project" value="GO_Central"/>
</dbReference>
<dbReference type="CDD" id="cd07185">
    <property type="entry name" value="OmpA_C-like"/>
    <property type="match status" value="1"/>
</dbReference>
<dbReference type="Gene3D" id="3.30.1330.60">
    <property type="entry name" value="OmpA-like domain"/>
    <property type="match status" value="1"/>
</dbReference>
<dbReference type="InterPro" id="IPR050330">
    <property type="entry name" value="Bact_OuterMem_StrucFunc"/>
</dbReference>
<dbReference type="InterPro" id="IPR025713">
    <property type="entry name" value="MotB-like_N_dom"/>
</dbReference>
<dbReference type="InterPro" id="IPR006665">
    <property type="entry name" value="OmpA-like"/>
</dbReference>
<dbReference type="InterPro" id="IPR036737">
    <property type="entry name" value="OmpA-like_sf"/>
</dbReference>
<dbReference type="NCBIfam" id="NF005382">
    <property type="entry name" value="PRK06925.1"/>
    <property type="match status" value="1"/>
</dbReference>
<dbReference type="PANTHER" id="PTHR30329:SF16">
    <property type="entry name" value="CHEMOTAXIS MOTB PROTEIN"/>
    <property type="match status" value="1"/>
</dbReference>
<dbReference type="PANTHER" id="PTHR30329">
    <property type="entry name" value="STATOR ELEMENT OF FLAGELLAR MOTOR COMPLEX"/>
    <property type="match status" value="1"/>
</dbReference>
<dbReference type="Pfam" id="PF13677">
    <property type="entry name" value="MotB_plug"/>
    <property type="match status" value="1"/>
</dbReference>
<dbReference type="Pfam" id="PF00691">
    <property type="entry name" value="OmpA"/>
    <property type="match status" value="1"/>
</dbReference>
<dbReference type="SUPFAM" id="SSF103088">
    <property type="entry name" value="OmpA-like"/>
    <property type="match status" value="1"/>
</dbReference>
<dbReference type="PROSITE" id="PS51123">
    <property type="entry name" value="OMPA_2"/>
    <property type="match status" value="1"/>
</dbReference>
<name>YTXE_BACSU</name>
<proteinExistence type="inferred from homology"/>
<organism>
    <name type="scientific">Bacillus subtilis (strain 168)</name>
    <dbReference type="NCBI Taxonomy" id="224308"/>
    <lineage>
        <taxon>Bacteria</taxon>
        <taxon>Bacillati</taxon>
        <taxon>Bacillota</taxon>
        <taxon>Bacilli</taxon>
        <taxon>Bacillales</taxon>
        <taxon>Bacillaceae</taxon>
        <taxon>Bacillus</taxon>
    </lineage>
</organism>
<comment type="function">
    <text>May be involved in some transport function.</text>
</comment>
<comment type="subcellular location">
    <subcellularLocation>
        <location evidence="4">Cell membrane</location>
        <topology evidence="4">Single-pass type II membrane protein</topology>
    </subcellularLocation>
</comment>
<comment type="similarity">
    <text evidence="4">Belongs to the MotB family.</text>
</comment>
<keyword id="KW-1003">Cell membrane</keyword>
<keyword id="KW-0472">Membrane</keyword>
<keyword id="KW-1185">Reference proteome</keyword>
<keyword id="KW-0812">Transmembrane</keyword>
<keyword id="KW-1133">Transmembrane helix</keyword>
<keyword id="KW-0813">Transport</keyword>